<keyword id="KW-0963">Cytoplasm</keyword>
<keyword id="KW-0378">Hydrolase</keyword>
<keyword id="KW-0460">Magnesium</keyword>
<keyword id="KW-0479">Metal-binding</keyword>
<keyword id="KW-1185">Reference proteome</keyword>
<dbReference type="EC" id="3.6.1.1" evidence="1"/>
<dbReference type="EMBL" id="AL646052">
    <property type="protein sequence ID" value="CAD16056.1"/>
    <property type="molecule type" value="Genomic_DNA"/>
</dbReference>
<dbReference type="RefSeq" id="WP_011002272.1">
    <property type="nucleotide sequence ID" value="NC_003295.1"/>
</dbReference>
<dbReference type="SMR" id="Q8XWX1"/>
<dbReference type="STRING" id="267608.RSc2349"/>
<dbReference type="EnsemblBacteria" id="CAD16056">
    <property type="protein sequence ID" value="CAD16056"/>
    <property type="gene ID" value="RSc2349"/>
</dbReference>
<dbReference type="KEGG" id="rso:RSc2349"/>
<dbReference type="eggNOG" id="COG0221">
    <property type="taxonomic scope" value="Bacteria"/>
</dbReference>
<dbReference type="HOGENOM" id="CLU_073198_1_0_4"/>
<dbReference type="Proteomes" id="UP000001436">
    <property type="component" value="Chromosome"/>
</dbReference>
<dbReference type="GO" id="GO:0005737">
    <property type="term" value="C:cytoplasm"/>
    <property type="evidence" value="ECO:0007669"/>
    <property type="project" value="UniProtKB-SubCell"/>
</dbReference>
<dbReference type="GO" id="GO:0004427">
    <property type="term" value="F:inorganic diphosphate phosphatase activity"/>
    <property type="evidence" value="ECO:0007669"/>
    <property type="project" value="UniProtKB-UniRule"/>
</dbReference>
<dbReference type="GO" id="GO:0000287">
    <property type="term" value="F:magnesium ion binding"/>
    <property type="evidence" value="ECO:0007669"/>
    <property type="project" value="UniProtKB-UniRule"/>
</dbReference>
<dbReference type="GO" id="GO:0006796">
    <property type="term" value="P:phosphate-containing compound metabolic process"/>
    <property type="evidence" value="ECO:0007669"/>
    <property type="project" value="InterPro"/>
</dbReference>
<dbReference type="CDD" id="cd00412">
    <property type="entry name" value="pyrophosphatase"/>
    <property type="match status" value="1"/>
</dbReference>
<dbReference type="FunFam" id="3.90.80.10:FF:000003">
    <property type="entry name" value="Inorganic pyrophosphatase"/>
    <property type="match status" value="1"/>
</dbReference>
<dbReference type="Gene3D" id="3.90.80.10">
    <property type="entry name" value="Inorganic pyrophosphatase"/>
    <property type="match status" value="1"/>
</dbReference>
<dbReference type="HAMAP" id="MF_00209">
    <property type="entry name" value="Inorganic_PPase"/>
    <property type="match status" value="1"/>
</dbReference>
<dbReference type="InterPro" id="IPR008162">
    <property type="entry name" value="Pyrophosphatase"/>
</dbReference>
<dbReference type="InterPro" id="IPR036649">
    <property type="entry name" value="Pyrophosphatase_sf"/>
</dbReference>
<dbReference type="NCBIfam" id="NF002317">
    <property type="entry name" value="PRK01250.1"/>
    <property type="match status" value="1"/>
</dbReference>
<dbReference type="PANTHER" id="PTHR10286">
    <property type="entry name" value="INORGANIC PYROPHOSPHATASE"/>
    <property type="match status" value="1"/>
</dbReference>
<dbReference type="Pfam" id="PF00719">
    <property type="entry name" value="Pyrophosphatase"/>
    <property type="match status" value="1"/>
</dbReference>
<dbReference type="SUPFAM" id="SSF50324">
    <property type="entry name" value="Inorganic pyrophosphatase"/>
    <property type="match status" value="1"/>
</dbReference>
<dbReference type="PROSITE" id="PS00387">
    <property type="entry name" value="PPASE"/>
    <property type="match status" value="1"/>
</dbReference>
<name>IPYR_RALN1</name>
<reference key="1">
    <citation type="journal article" date="2002" name="Nature">
        <title>Genome sequence of the plant pathogen Ralstonia solanacearum.</title>
        <authorList>
            <person name="Salanoubat M."/>
            <person name="Genin S."/>
            <person name="Artiguenave F."/>
            <person name="Gouzy J."/>
            <person name="Mangenot S."/>
            <person name="Arlat M."/>
            <person name="Billault A."/>
            <person name="Brottier P."/>
            <person name="Camus J.-C."/>
            <person name="Cattolico L."/>
            <person name="Chandler M."/>
            <person name="Choisne N."/>
            <person name="Claudel-Renard C."/>
            <person name="Cunnac S."/>
            <person name="Demange N."/>
            <person name="Gaspin C."/>
            <person name="Lavie M."/>
            <person name="Moisan A."/>
            <person name="Robert C."/>
            <person name="Saurin W."/>
            <person name="Schiex T."/>
            <person name="Siguier P."/>
            <person name="Thebault P."/>
            <person name="Whalen M."/>
            <person name="Wincker P."/>
            <person name="Levy M."/>
            <person name="Weissenbach J."/>
            <person name="Boucher C.A."/>
        </authorList>
    </citation>
    <scope>NUCLEOTIDE SEQUENCE [LARGE SCALE GENOMIC DNA]</scope>
    <source>
        <strain>ATCC BAA-1114 / GMI1000</strain>
    </source>
</reference>
<feature type="chain" id="PRO_0000137523" description="Inorganic pyrophosphatase">
    <location>
        <begin position="1"/>
        <end position="175"/>
    </location>
</feature>
<feature type="binding site" evidence="1">
    <location>
        <position position="30"/>
    </location>
    <ligand>
        <name>substrate</name>
    </ligand>
</feature>
<feature type="binding site" evidence="1">
    <location>
        <position position="44"/>
    </location>
    <ligand>
        <name>substrate</name>
    </ligand>
</feature>
<feature type="binding site" evidence="1">
    <location>
        <position position="56"/>
    </location>
    <ligand>
        <name>substrate</name>
    </ligand>
</feature>
<feature type="binding site" evidence="1">
    <location>
        <position position="66"/>
    </location>
    <ligand>
        <name>Mg(2+)</name>
        <dbReference type="ChEBI" id="CHEBI:18420"/>
        <label>1</label>
    </ligand>
</feature>
<feature type="binding site" evidence="1">
    <location>
        <position position="71"/>
    </location>
    <ligand>
        <name>Mg(2+)</name>
        <dbReference type="ChEBI" id="CHEBI:18420"/>
        <label>1</label>
    </ligand>
</feature>
<feature type="binding site" evidence="1">
    <location>
        <position position="71"/>
    </location>
    <ligand>
        <name>Mg(2+)</name>
        <dbReference type="ChEBI" id="CHEBI:18420"/>
        <label>2</label>
    </ligand>
</feature>
<feature type="binding site" evidence="1">
    <location>
        <position position="103"/>
    </location>
    <ligand>
        <name>Mg(2+)</name>
        <dbReference type="ChEBI" id="CHEBI:18420"/>
        <label>1</label>
    </ligand>
</feature>
<feature type="binding site" evidence="1">
    <location>
        <position position="142"/>
    </location>
    <ligand>
        <name>substrate</name>
    </ligand>
</feature>
<organism>
    <name type="scientific">Ralstonia nicotianae (strain ATCC BAA-1114 / GMI1000)</name>
    <name type="common">Ralstonia solanacearum</name>
    <dbReference type="NCBI Taxonomy" id="267608"/>
    <lineage>
        <taxon>Bacteria</taxon>
        <taxon>Pseudomonadati</taxon>
        <taxon>Pseudomonadota</taxon>
        <taxon>Betaproteobacteria</taxon>
        <taxon>Burkholderiales</taxon>
        <taxon>Burkholderiaceae</taxon>
        <taxon>Ralstonia</taxon>
        <taxon>Ralstonia solanacearum species complex</taxon>
    </lineage>
</organism>
<gene>
    <name evidence="1" type="primary">ppa</name>
    <name type="ordered locus">RSc2349</name>
    <name type="ORF">RS01197</name>
</gene>
<comment type="function">
    <text evidence="1">Catalyzes the hydrolysis of inorganic pyrophosphate (PPi) forming two phosphate ions.</text>
</comment>
<comment type="catalytic activity">
    <reaction evidence="1">
        <text>diphosphate + H2O = 2 phosphate + H(+)</text>
        <dbReference type="Rhea" id="RHEA:24576"/>
        <dbReference type="ChEBI" id="CHEBI:15377"/>
        <dbReference type="ChEBI" id="CHEBI:15378"/>
        <dbReference type="ChEBI" id="CHEBI:33019"/>
        <dbReference type="ChEBI" id="CHEBI:43474"/>
        <dbReference type="EC" id="3.6.1.1"/>
    </reaction>
</comment>
<comment type="cofactor">
    <cofactor evidence="1">
        <name>Mg(2+)</name>
        <dbReference type="ChEBI" id="CHEBI:18420"/>
    </cofactor>
</comment>
<comment type="subunit">
    <text evidence="1">Homohexamer.</text>
</comment>
<comment type="subcellular location">
    <subcellularLocation>
        <location evidence="1">Cytoplasm</location>
    </subcellularLocation>
</comment>
<comment type="similarity">
    <text evidence="1">Belongs to the PPase family.</text>
</comment>
<evidence type="ECO:0000255" key="1">
    <source>
        <dbReference type="HAMAP-Rule" id="MF_00209"/>
    </source>
</evidence>
<protein>
    <recommendedName>
        <fullName evidence="1">Inorganic pyrophosphatase</fullName>
        <ecNumber evidence="1">3.6.1.1</ecNumber>
    </recommendedName>
    <alternativeName>
        <fullName evidence="1">Pyrophosphate phospho-hydrolase</fullName>
        <shortName evidence="1">PPase</shortName>
    </alternativeName>
</protein>
<sequence>MSFNNVSPGKDIPNDFNVIIEIPAQSDPVKYEADKETGLLHVDRFVGTGMRYPANYGFIPQTLAGDGDPVDVLVVTPFPLVHGCVVRCRTLGMLKMTDESGQDAKLVAVPVNKLSPATAHMTDLSDIGQNLLDQIKHFFEQYKALEPGKWVKVEGWGGIEEAHKEIVDGVANYKK</sequence>
<proteinExistence type="inferred from homology"/>
<accession>Q8XWX1</accession>